<organism>
    <name type="scientific">Sus scrofa</name>
    <name type="common">Pig</name>
    <dbReference type="NCBI Taxonomy" id="9823"/>
    <lineage>
        <taxon>Eukaryota</taxon>
        <taxon>Metazoa</taxon>
        <taxon>Chordata</taxon>
        <taxon>Craniata</taxon>
        <taxon>Vertebrata</taxon>
        <taxon>Euteleostomi</taxon>
        <taxon>Mammalia</taxon>
        <taxon>Eutheria</taxon>
        <taxon>Laurasiatheria</taxon>
        <taxon>Artiodactyla</taxon>
        <taxon>Suina</taxon>
        <taxon>Suidae</taxon>
        <taxon>Sus</taxon>
    </lineage>
</organism>
<accession>O02858</accession>
<accession>A0A4X1U207</accession>
<accession>Q6RWA7</accession>
<dbReference type="EC" id="1.14.19.1" evidence="2"/>
<dbReference type="EMBL" id="Z97186">
    <property type="protein sequence ID" value="CAB10004.1"/>
    <property type="molecule type" value="mRNA"/>
</dbReference>
<dbReference type="EMBL" id="AY487829">
    <property type="protein sequence ID" value="AAR87713.1"/>
    <property type="molecule type" value="mRNA"/>
</dbReference>
<dbReference type="EMBL" id="AY487830">
    <property type="protein sequence ID" value="AAR87714.1"/>
    <property type="molecule type" value="Genomic_DNA"/>
</dbReference>
<dbReference type="EMBL" id="JN613287">
    <property type="protein sequence ID" value="AEY68756.1"/>
    <property type="molecule type" value="mRNA"/>
</dbReference>
<dbReference type="EMBL" id="DQIR01249731">
    <property type="protein sequence ID" value="HDC05209.1"/>
    <property type="molecule type" value="Transcribed_RNA"/>
</dbReference>
<dbReference type="RefSeq" id="NP_998946.1">
    <property type="nucleotide sequence ID" value="NM_213781.1"/>
</dbReference>
<dbReference type="SMR" id="O02858"/>
<dbReference type="FunCoup" id="O02858">
    <property type="interactions" value="98"/>
</dbReference>
<dbReference type="STRING" id="9823.ENSSSCP00000074098"/>
<dbReference type="PaxDb" id="9823-ENSSSCP00000011244"/>
<dbReference type="Ensembl" id="ENSSSCT00000074035.2">
    <property type="protein sequence ID" value="ENSSSCP00000066365.2"/>
    <property type="gene ID" value="ENSSSCG00000010554.6"/>
</dbReference>
<dbReference type="Ensembl" id="ENSSSCT00015091855.1">
    <property type="protein sequence ID" value="ENSSSCP00015037586.1"/>
    <property type="gene ID" value="ENSSSCG00015068485.1"/>
</dbReference>
<dbReference type="Ensembl" id="ENSSSCT00070027417.1">
    <property type="protein sequence ID" value="ENSSSCP00070022809.1"/>
    <property type="gene ID" value="ENSSSCG00070014006.1"/>
</dbReference>
<dbReference type="Ensembl" id="ENSSSCT00085022778">
    <property type="protein sequence ID" value="ENSSSCP00085015692"/>
    <property type="gene ID" value="ENSSSCG00085012135"/>
</dbReference>
<dbReference type="Ensembl" id="ENSSSCT00090055809">
    <property type="protein sequence ID" value="ENSSSCP00090034836"/>
    <property type="gene ID" value="ENSSSCG00090031526"/>
</dbReference>
<dbReference type="Ensembl" id="ENSSSCT00105074727">
    <property type="protein sequence ID" value="ENSSSCP00105052916"/>
    <property type="gene ID" value="ENSSSCG00105039202"/>
</dbReference>
<dbReference type="Ensembl" id="ENSSSCT00110041944">
    <property type="protein sequence ID" value="ENSSSCP00110029443"/>
    <property type="gene ID" value="ENSSSCG00110021661"/>
</dbReference>
<dbReference type="Ensembl" id="ENSSSCT00115026920">
    <property type="protein sequence ID" value="ENSSSCP00115025508"/>
    <property type="gene ID" value="ENSSSCG00115015452"/>
</dbReference>
<dbReference type="Ensembl" id="ENSSSCT00130007154">
    <property type="protein sequence ID" value="ENSSSCP00130004759"/>
    <property type="gene ID" value="ENSSSCG00130003863"/>
</dbReference>
<dbReference type="GeneID" id="396670"/>
<dbReference type="KEGG" id="ssc:396670"/>
<dbReference type="CTD" id="6319"/>
<dbReference type="VGNC" id="VGNC:111140">
    <property type="gene designation" value="SCD"/>
</dbReference>
<dbReference type="eggNOG" id="KOG1600">
    <property type="taxonomic scope" value="Eukaryota"/>
</dbReference>
<dbReference type="GeneTree" id="ENSGT00940000154908"/>
<dbReference type="HOGENOM" id="CLU_027359_0_0_1"/>
<dbReference type="InParanoid" id="O02858"/>
<dbReference type="OMA" id="SCGESWH"/>
<dbReference type="OrthoDB" id="10260134at2759"/>
<dbReference type="TreeFam" id="TF313251"/>
<dbReference type="Reactome" id="R-SSC-75105">
    <property type="pathway name" value="Fatty acyl-CoA biosynthesis"/>
</dbReference>
<dbReference type="Proteomes" id="UP000008227">
    <property type="component" value="Chromosome 14"/>
</dbReference>
<dbReference type="Proteomes" id="UP000314985">
    <property type="component" value="Chromosome 14"/>
</dbReference>
<dbReference type="Proteomes" id="UP000694570">
    <property type="component" value="Unplaced"/>
</dbReference>
<dbReference type="Proteomes" id="UP000694571">
    <property type="component" value="Unplaced"/>
</dbReference>
<dbReference type="Proteomes" id="UP000694720">
    <property type="component" value="Unplaced"/>
</dbReference>
<dbReference type="Proteomes" id="UP000694722">
    <property type="component" value="Unplaced"/>
</dbReference>
<dbReference type="Proteomes" id="UP000694723">
    <property type="component" value="Unplaced"/>
</dbReference>
<dbReference type="Proteomes" id="UP000694724">
    <property type="component" value="Unplaced"/>
</dbReference>
<dbReference type="Proteomes" id="UP000694725">
    <property type="component" value="Unplaced"/>
</dbReference>
<dbReference type="Proteomes" id="UP000694726">
    <property type="component" value="Unplaced"/>
</dbReference>
<dbReference type="Proteomes" id="UP000694727">
    <property type="component" value="Unplaced"/>
</dbReference>
<dbReference type="Proteomes" id="UP000694728">
    <property type="component" value="Unplaced"/>
</dbReference>
<dbReference type="GO" id="GO:0005789">
    <property type="term" value="C:endoplasmic reticulum membrane"/>
    <property type="evidence" value="ECO:0000250"/>
    <property type="project" value="UniProtKB"/>
</dbReference>
<dbReference type="GO" id="GO:0016020">
    <property type="term" value="C:membrane"/>
    <property type="evidence" value="ECO:0000250"/>
    <property type="project" value="UniProtKB"/>
</dbReference>
<dbReference type="GO" id="GO:0005730">
    <property type="term" value="C:nucleolus"/>
    <property type="evidence" value="ECO:0007669"/>
    <property type="project" value="Ensembl"/>
</dbReference>
<dbReference type="GO" id="GO:0005506">
    <property type="term" value="F:iron ion binding"/>
    <property type="evidence" value="ECO:0000250"/>
    <property type="project" value="UniProtKB"/>
</dbReference>
<dbReference type="GO" id="GO:0016491">
    <property type="term" value="F:oxidoreductase activity"/>
    <property type="evidence" value="ECO:0000250"/>
    <property type="project" value="UniProtKB"/>
</dbReference>
<dbReference type="GO" id="GO:0004768">
    <property type="term" value="F:stearoyl-CoA 9-desaturase activity"/>
    <property type="evidence" value="ECO:0000250"/>
    <property type="project" value="UniProtKB"/>
</dbReference>
<dbReference type="GO" id="GO:0006636">
    <property type="term" value="P:unsaturated fatty acid biosynthetic process"/>
    <property type="evidence" value="ECO:0000250"/>
    <property type="project" value="UniProtKB"/>
</dbReference>
<dbReference type="CDD" id="cd03505">
    <property type="entry name" value="Delta9-FADS-like"/>
    <property type="match status" value="1"/>
</dbReference>
<dbReference type="InterPro" id="IPR015876">
    <property type="entry name" value="Acyl-CoA_DS"/>
</dbReference>
<dbReference type="InterPro" id="IPR005804">
    <property type="entry name" value="FA_desaturase_dom"/>
</dbReference>
<dbReference type="InterPro" id="IPR001522">
    <property type="entry name" value="FADS-1_CS"/>
</dbReference>
<dbReference type="PANTHER" id="PTHR11351">
    <property type="entry name" value="ACYL-COA DESATURASE"/>
    <property type="match status" value="1"/>
</dbReference>
<dbReference type="PANTHER" id="PTHR11351:SF102">
    <property type="entry name" value="STEAROYL-COA DESATURASE"/>
    <property type="match status" value="1"/>
</dbReference>
<dbReference type="Pfam" id="PF00487">
    <property type="entry name" value="FA_desaturase"/>
    <property type="match status" value="1"/>
</dbReference>
<dbReference type="PRINTS" id="PR00075">
    <property type="entry name" value="FACDDSATRASE"/>
</dbReference>
<dbReference type="PROSITE" id="PS00476">
    <property type="entry name" value="FATTY_ACID_DESATUR_1"/>
    <property type="match status" value="1"/>
</dbReference>
<sequence length="359" mass="41376">MPAHLLQEEISSSYTTTTTITAPSSRVLQNGGGKLEKTPQYVEEDIRPEMKDDIYDPTYQDKEGPRPKLEYVWRNIILMSLLHLGALYGIILIPTCKIYTLLWAFAYYLLSAVGVTAGAHRLWSHRTYKARLPLRVFLIIANTMAFQNDVYEWARDHRAHHKFSETDADPHNSRRGFFFSHVGWLLVRKHPAVKEKGGLLNMSDLKAEKLVMFQRRYYKPGILLMCFILPTIVPWYCWGEAFPQSLFVATFLRYAIVLNATWLVNSAAHLYGYRPYDKTISPRENILVSLGAVGEGFHNYHHTFPYDYSASEYRWHINLTTFFIDCMAALGLAYDRKKVSKAAILARIKRTGDESYKSG</sequence>
<feature type="chain" id="PRO_0000185399" description="Stearoyl-CoA desaturase">
    <location>
        <begin position="1"/>
        <end position="359"/>
    </location>
</feature>
<feature type="topological domain" description="Cytoplasmic" evidence="1">
    <location>
        <begin position="1"/>
        <end position="72"/>
    </location>
</feature>
<feature type="transmembrane region" description="Helical" evidence="1">
    <location>
        <begin position="73"/>
        <end position="93"/>
    </location>
</feature>
<feature type="topological domain" description="Lumenal" evidence="1">
    <location>
        <begin position="94"/>
        <end position="97"/>
    </location>
</feature>
<feature type="transmembrane region" description="Helical" evidence="1">
    <location>
        <begin position="98"/>
        <end position="118"/>
    </location>
</feature>
<feature type="topological domain" description="Cytoplasmic" evidence="1">
    <location>
        <begin position="119"/>
        <end position="217"/>
    </location>
</feature>
<feature type="transmembrane region" description="Helical" evidence="1">
    <location>
        <begin position="218"/>
        <end position="237"/>
    </location>
</feature>
<feature type="topological domain" description="Lumenal" evidence="1">
    <location>
        <begin position="238"/>
        <end position="241"/>
    </location>
</feature>
<feature type="transmembrane region" description="Helical" evidence="1">
    <location>
        <begin position="242"/>
        <end position="263"/>
    </location>
</feature>
<feature type="topological domain" description="Cytoplasmic" evidence="1">
    <location>
        <begin position="264"/>
        <end position="359"/>
    </location>
</feature>
<feature type="short sequence motif" description="Histidine box-1" evidence="3">
    <location>
        <begin position="120"/>
        <end position="125"/>
    </location>
</feature>
<feature type="short sequence motif" description="Histidine box-2" evidence="3">
    <location>
        <begin position="157"/>
        <end position="161"/>
    </location>
</feature>
<feature type="short sequence motif" description="Histidine box-3" evidence="3">
    <location>
        <begin position="298"/>
        <end position="302"/>
    </location>
</feature>
<feature type="binding site" evidence="1">
    <location>
        <position position="75"/>
    </location>
    <ligand>
        <name>substrate</name>
    </ligand>
</feature>
<feature type="binding site" evidence="2">
    <location>
        <position position="120"/>
    </location>
    <ligand>
        <name>Fe cation</name>
        <dbReference type="ChEBI" id="CHEBI:24875"/>
        <label>1</label>
    </ligand>
</feature>
<feature type="binding site" evidence="2">
    <location>
        <position position="125"/>
    </location>
    <ligand>
        <name>Fe cation</name>
        <dbReference type="ChEBI" id="CHEBI:24875"/>
        <label>1</label>
    </ligand>
</feature>
<feature type="binding site" evidence="1">
    <location>
        <position position="148"/>
    </location>
    <ligand>
        <name>substrate</name>
    </ligand>
</feature>
<feature type="binding site" evidence="1">
    <location>
        <position position="155"/>
    </location>
    <ligand>
        <name>substrate</name>
    </ligand>
</feature>
<feature type="binding site" evidence="1">
    <location>
        <position position="156"/>
    </location>
    <ligand>
        <name>substrate</name>
    </ligand>
</feature>
<feature type="binding site" evidence="2">
    <location>
        <position position="157"/>
    </location>
    <ligand>
        <name>Fe cation</name>
        <dbReference type="ChEBI" id="CHEBI:24875"/>
        <label>1</label>
    </ligand>
</feature>
<feature type="binding site" evidence="2">
    <location>
        <position position="160"/>
    </location>
    <ligand>
        <name>Fe cation</name>
        <dbReference type="ChEBI" id="CHEBI:24875"/>
        <label>2</label>
    </ligand>
</feature>
<feature type="binding site" evidence="2">
    <location>
        <position position="161"/>
    </location>
    <ligand>
        <name>Fe cation</name>
        <dbReference type="ChEBI" id="CHEBI:24875"/>
        <label>1</label>
    </ligand>
</feature>
<feature type="binding site" evidence="1">
    <location>
        <position position="188"/>
    </location>
    <ligand>
        <name>substrate</name>
    </ligand>
</feature>
<feature type="binding site" evidence="1">
    <location>
        <position position="189"/>
    </location>
    <ligand>
        <name>substrate</name>
    </ligand>
</feature>
<feature type="binding site" evidence="1">
    <location>
        <position position="262"/>
    </location>
    <ligand>
        <name>substrate</name>
    </ligand>
</feature>
<feature type="binding site" evidence="2">
    <location>
        <position position="269"/>
    </location>
    <ligand>
        <name>Fe cation</name>
        <dbReference type="ChEBI" id="CHEBI:24875"/>
        <label>2</label>
    </ligand>
</feature>
<feature type="binding site" evidence="2">
    <location>
        <position position="298"/>
    </location>
    <ligand>
        <name>Fe cation</name>
        <dbReference type="ChEBI" id="CHEBI:24875"/>
        <label>2</label>
    </ligand>
</feature>
<feature type="binding site" evidence="2">
    <location>
        <position position="301"/>
    </location>
    <ligand>
        <name>Fe cation</name>
        <dbReference type="ChEBI" id="CHEBI:24875"/>
        <label>1</label>
    </ligand>
</feature>
<feature type="binding site" evidence="2">
    <location>
        <position position="302"/>
    </location>
    <ligand>
        <name>Fe cation</name>
        <dbReference type="ChEBI" id="CHEBI:24875"/>
        <label>2</label>
    </ligand>
</feature>
<feature type="modified residue" description="Phosphoserine" evidence="1">
    <location>
        <position position="203"/>
    </location>
</feature>
<feature type="sequence conflict" description="In Ref. 4; CAB10004." ref="4">
    <original>L</original>
    <variation>S</variation>
    <location>
        <position position="35"/>
    </location>
</feature>
<feature type="sequence conflict" description="In Ref. 4; CAB10004." ref="4">
    <original>RP</original>
    <variation>QG</variation>
    <location>
        <begin position="66"/>
        <end position="67"/>
    </location>
</feature>
<comment type="function">
    <text evidence="2">Stearoyl-CoA desaturase that utilizes O(2) and electrons from reduced cytochrome b5 to introduce the first double bond into saturated fatty acyl-CoA substrates. Catalyzes the insertion of a cis double bond at the delta-9 position into fatty acyl-CoA substrates including palmitoyl-CoA and stearoyl-CoA (By similarity). Gives rise to a mixture of 16:1 and 18:1 unsaturated fatty acids. Plays an important role in lipid biosynthesis. Plays an important role in regulating the expression of genes that are involved in lipogenesis and in regulating mitochondrial fatty acid oxidation (By similarity). Plays an important role in body energy homeostasis (By similarity). Contributes to the biosynthesis of membrane phospholipids, cholesterol esters and triglycerides (By similarity).</text>
</comment>
<comment type="catalytic activity">
    <reaction evidence="2">
        <text>octadecanoyl-CoA + 2 Fe(II)-[cytochrome b5] + O2 + 2 H(+) = (9Z)-octadecenoyl-CoA + 2 Fe(III)-[cytochrome b5] + 2 H2O</text>
        <dbReference type="Rhea" id="RHEA:19721"/>
        <dbReference type="Rhea" id="RHEA-COMP:10438"/>
        <dbReference type="Rhea" id="RHEA-COMP:10439"/>
        <dbReference type="ChEBI" id="CHEBI:15377"/>
        <dbReference type="ChEBI" id="CHEBI:15378"/>
        <dbReference type="ChEBI" id="CHEBI:15379"/>
        <dbReference type="ChEBI" id="CHEBI:29033"/>
        <dbReference type="ChEBI" id="CHEBI:29034"/>
        <dbReference type="ChEBI" id="CHEBI:57387"/>
        <dbReference type="ChEBI" id="CHEBI:57394"/>
        <dbReference type="EC" id="1.14.19.1"/>
    </reaction>
</comment>
<comment type="catalytic activity">
    <reaction evidence="1">
        <text>hexadecanoyl-CoA + 2 Fe(II)-[cytochrome b5] + O2 + 2 H(+) = (9Z)-hexadecenoyl-CoA + 2 Fe(III)-[cytochrome b5] + 2 H2O</text>
        <dbReference type="Rhea" id="RHEA:36931"/>
        <dbReference type="Rhea" id="RHEA-COMP:10438"/>
        <dbReference type="Rhea" id="RHEA-COMP:10439"/>
        <dbReference type="ChEBI" id="CHEBI:15377"/>
        <dbReference type="ChEBI" id="CHEBI:15378"/>
        <dbReference type="ChEBI" id="CHEBI:15379"/>
        <dbReference type="ChEBI" id="CHEBI:29033"/>
        <dbReference type="ChEBI" id="CHEBI:29034"/>
        <dbReference type="ChEBI" id="CHEBI:57379"/>
        <dbReference type="ChEBI" id="CHEBI:61540"/>
    </reaction>
</comment>
<comment type="cofactor">
    <cofactor evidence="2">
        <name>Fe(2+)</name>
        <dbReference type="ChEBI" id="CHEBI:29033"/>
    </cofactor>
    <text evidence="2">Expected to bind 2 Fe(2+) ions per subunit.</text>
</comment>
<comment type="subcellular location">
    <subcellularLocation>
        <location evidence="2">Endoplasmic reticulum membrane</location>
        <topology evidence="3">Multi-pass membrane protein</topology>
    </subcellularLocation>
</comment>
<comment type="domain">
    <text evidence="1">The histidine box domains are involved in binding the catalytic metal ions.</text>
</comment>
<comment type="similarity">
    <text evidence="3">Belongs to the fatty acid desaturase type 1 family.</text>
</comment>
<gene>
    <name type="primary">SCD</name>
</gene>
<evidence type="ECO:0000250" key="1">
    <source>
        <dbReference type="UniProtKB" id="O00767"/>
    </source>
</evidence>
<evidence type="ECO:0000250" key="2">
    <source>
        <dbReference type="UniProtKB" id="P13516"/>
    </source>
</evidence>
<evidence type="ECO:0000305" key="3"/>
<protein>
    <recommendedName>
        <fullName>Stearoyl-CoA desaturase</fullName>
        <ecNumber evidence="2">1.14.19.1</ecNumber>
    </recommendedName>
    <alternativeName>
        <fullName>Acyl-CoA desaturase</fullName>
    </alternativeName>
    <alternativeName>
        <fullName>Delta(9)-desaturase</fullName>
        <shortName>Delta-9 desaturase</shortName>
    </alternativeName>
    <alternativeName>
        <fullName>Fatty acid desaturase</fullName>
    </alternativeName>
</protein>
<name>SCD_PIG</name>
<keyword id="KW-0256">Endoplasmic reticulum</keyword>
<keyword id="KW-0275">Fatty acid biosynthesis</keyword>
<keyword id="KW-0276">Fatty acid metabolism</keyword>
<keyword id="KW-0408">Iron</keyword>
<keyword id="KW-0444">Lipid biosynthesis</keyword>
<keyword id="KW-0443">Lipid metabolism</keyword>
<keyword id="KW-0472">Membrane</keyword>
<keyword id="KW-0479">Metal-binding</keyword>
<keyword id="KW-0560">Oxidoreductase</keyword>
<keyword id="KW-0597">Phosphoprotein</keyword>
<keyword id="KW-1185">Reference proteome</keyword>
<keyword id="KW-0812">Transmembrane</keyword>
<keyword id="KW-1133">Transmembrane helix</keyword>
<proteinExistence type="evidence at transcript level"/>
<reference key="1">
    <citation type="journal article" date="2004" name="Anim. Genet.">
        <title>Characterization of five single nucleotide polymorphisms in the porcine stearoyl-CoA desaturase (SCD) gene.</title>
        <authorList>
            <person name="Ren J."/>
            <person name="Knorr C."/>
            <person name="Guo Y.M."/>
            <person name="Ding N.S."/>
            <person name="Ai H.S."/>
            <person name="Brenig B."/>
            <person name="Huang L.S."/>
        </authorList>
    </citation>
    <scope>NUCLEOTIDE SEQUENCE [GENOMIC DNA / MRNA]</scope>
</reference>
<reference key="2">
    <citation type="journal article" date="2004" name="Gene">
        <title>Isolation and molecular characterization of the porcine stearoyl-CoA desaturase gene.</title>
        <authorList>
            <person name="Ren J."/>
            <person name="Knorr C."/>
            <person name="Huang L."/>
            <person name="Brenig B."/>
        </authorList>
    </citation>
    <scope>NUCLEOTIDE SEQUENCE [GENOMIC DNA]</scope>
</reference>
<reference key="3">
    <citation type="submission" date="2017-08" db="EMBL/GenBank/DDBJ databases">
        <title>USMARCv1.0.</title>
        <authorList>
            <person name="Hannum G.I."/>
            <person name="Koren S."/>
            <person name="Schroeder S.G."/>
            <person name="Chin S.C."/>
            <person name="Nonneman D.J."/>
            <person name="Becker S.A."/>
            <person name="Rosen B.D."/>
            <person name="Bickhart D.M."/>
            <person name="Putnam N.H."/>
            <person name="Green R.E."/>
            <person name="Tuggle C.K."/>
            <person name="Liu H."/>
            <person name="Rohrer G.A."/>
            <person name="Warr A."/>
            <person name="Hall R."/>
            <person name="Kim K."/>
            <person name="Hume D.A."/>
            <person name="Talbot R."/>
            <person name="Chow W."/>
            <person name="Howe K."/>
            <person name="Schwartz A.S."/>
            <person name="Watson M."/>
            <person name="Archibald A.L."/>
            <person name="Phillippy A.M."/>
            <person name="Smith T.P.L."/>
        </authorList>
    </citation>
    <scope>NUCLEOTIDE SEQUENCE [LARGE SCALE GENOMIC DNA]</scope>
</reference>
<reference key="4">
    <citation type="submission" date="1997-06" db="EMBL/GenBank/DDBJ databases">
        <authorList>
            <person name="Fumiere O."/>
        </authorList>
    </citation>
    <scope>NUCLEOTIDE SEQUENCE [MRNA] OF 12-334</scope>
</reference>